<name>GCSP_SHEPC</name>
<reference key="1">
    <citation type="submission" date="2007-04" db="EMBL/GenBank/DDBJ databases">
        <title>Complete sequence of Shewanella putrefaciens CN-32.</title>
        <authorList>
            <consortium name="US DOE Joint Genome Institute"/>
            <person name="Copeland A."/>
            <person name="Lucas S."/>
            <person name="Lapidus A."/>
            <person name="Barry K."/>
            <person name="Detter J.C."/>
            <person name="Glavina del Rio T."/>
            <person name="Hammon N."/>
            <person name="Israni S."/>
            <person name="Dalin E."/>
            <person name="Tice H."/>
            <person name="Pitluck S."/>
            <person name="Chain P."/>
            <person name="Malfatti S."/>
            <person name="Shin M."/>
            <person name="Vergez L."/>
            <person name="Schmutz J."/>
            <person name="Larimer F."/>
            <person name="Land M."/>
            <person name="Hauser L."/>
            <person name="Kyrpides N."/>
            <person name="Mikhailova N."/>
            <person name="Romine M.F."/>
            <person name="Fredrickson J."/>
            <person name="Tiedje J."/>
            <person name="Richardson P."/>
        </authorList>
    </citation>
    <scope>NUCLEOTIDE SEQUENCE [LARGE SCALE GENOMIC DNA]</scope>
    <source>
        <strain>CN-32 / ATCC BAA-453</strain>
    </source>
</reference>
<protein>
    <recommendedName>
        <fullName evidence="1">Glycine dehydrogenase (decarboxylating)</fullName>
        <ecNumber evidence="1">1.4.4.2</ecNumber>
    </recommendedName>
    <alternativeName>
        <fullName evidence="1">Glycine cleavage system P-protein</fullName>
    </alternativeName>
    <alternativeName>
        <fullName evidence="1">Glycine decarboxylase</fullName>
    </alternativeName>
    <alternativeName>
        <fullName evidence="1">Glycine dehydrogenase (aminomethyl-transferring)</fullName>
    </alternativeName>
</protein>
<keyword id="KW-0560">Oxidoreductase</keyword>
<keyword id="KW-0663">Pyridoxal phosphate</keyword>
<proteinExistence type="inferred from homology"/>
<gene>
    <name evidence="1" type="primary">gcvP</name>
    <name type="ordered locus">Sputcn32_3209</name>
</gene>
<sequence>MTKQTLTQLEQHDLFLRRHIGPDSSQQQAMLNYVGAESLDDLTAQIVPESIRLSQELSIGDSCGEAEGIAYIRGLAKQNQVFKSYIGMGYYGTQVPNVILRNVLENPGWYTAYTPYQPEIAQGRLEAILNFQQVSMDLTGLDLASASLLDEATAAAEAMALAKRVSKAKKANIFFVADDVFPQTLDVVKTRAECFGFEVVVGPASEAVNHELFGALFQYTNRFGQITDFTELFAELRAKNVIVTVAADIMSLVLLKSPGAMGADVVFGSAQRFGVPMGFGGPHAAFFVARDEHKRSMPGRIIGVSKDARGNRALRMAMQTREQHIRREKANSNICTAQILLANMASFYAVFHGPDGLKTIASRIHRFADILAAGLQAKGVSLVNSTWFDTLSIKGLDVAAVNARALAAEMNLRFDADGTVGVSLDETTLRTDIDALFDVILGAGHGLDVAALDAQIVAQGSQSIPAALVRQDAILSHPTFNRYQSETEMMRYIKRLESKDLALNYSMISLGSCTMKLNAAVEMIPVSWPEFANMHPFCPLDQAKGYTQLIEELSSWLVNVTGYDAVCIQPNSGAQGEYAGLLAIKKYHESRGDAHRNICLIPQSAHGTNPASAQLAGMQVVVTACDKQGNVDLEDLKTKAAEVAENLSCIMITYPSTHGVYEESIREICDIVHQHGGQVYLDGANMNAQVGLTSPGFIGADVSHLNLHKTFAIPHGGGGPGMGPIGVKSHLAPFVAGHVVVKPGRVSDNNGAVSAAPYGSAGILPISWMYIKLLGSNGLKKSTQTALLNANYVMKKLSEHYPVLFRGRNDRVAHECIIDLRPLKEASGVTEMDIAKRLNDYGFHAPTMSFPVAGTLMIEPTESESKVELDRFIDAMVSIRAEIAKVESGEWPADNNPLHNAPHTMADIMDPEFDTRPYSREVAVFPSAAVRTNKFWPTVNRIDDVYGDRNLMCSCAPLSDYE</sequence>
<feature type="chain" id="PRO_1000045611" description="Glycine dehydrogenase (decarboxylating)">
    <location>
        <begin position="1"/>
        <end position="962"/>
    </location>
</feature>
<feature type="modified residue" description="N6-(pyridoxal phosphate)lysine" evidence="1">
    <location>
        <position position="709"/>
    </location>
</feature>
<comment type="function">
    <text evidence="1">The glycine cleavage system catalyzes the degradation of glycine. The P protein binds the alpha-amino group of glycine through its pyridoxal phosphate cofactor; CO(2) is released and the remaining methylamine moiety is then transferred to the lipoamide cofactor of the H protein.</text>
</comment>
<comment type="catalytic activity">
    <reaction evidence="1">
        <text>N(6)-[(R)-lipoyl]-L-lysyl-[glycine-cleavage complex H protein] + glycine + H(+) = N(6)-[(R)-S(8)-aminomethyldihydrolipoyl]-L-lysyl-[glycine-cleavage complex H protein] + CO2</text>
        <dbReference type="Rhea" id="RHEA:24304"/>
        <dbReference type="Rhea" id="RHEA-COMP:10494"/>
        <dbReference type="Rhea" id="RHEA-COMP:10495"/>
        <dbReference type="ChEBI" id="CHEBI:15378"/>
        <dbReference type="ChEBI" id="CHEBI:16526"/>
        <dbReference type="ChEBI" id="CHEBI:57305"/>
        <dbReference type="ChEBI" id="CHEBI:83099"/>
        <dbReference type="ChEBI" id="CHEBI:83143"/>
        <dbReference type="EC" id="1.4.4.2"/>
    </reaction>
</comment>
<comment type="cofactor">
    <cofactor evidence="1">
        <name>pyridoxal 5'-phosphate</name>
        <dbReference type="ChEBI" id="CHEBI:597326"/>
    </cofactor>
</comment>
<comment type="subunit">
    <text evidence="1">The glycine cleavage system is composed of four proteins: P, T, L and H.</text>
</comment>
<comment type="similarity">
    <text evidence="1">Belongs to the GcvP family.</text>
</comment>
<evidence type="ECO:0000255" key="1">
    <source>
        <dbReference type="HAMAP-Rule" id="MF_00711"/>
    </source>
</evidence>
<accession>A4YAD8</accession>
<organism>
    <name type="scientific">Shewanella putrefaciens (strain CN-32 / ATCC BAA-453)</name>
    <dbReference type="NCBI Taxonomy" id="319224"/>
    <lineage>
        <taxon>Bacteria</taxon>
        <taxon>Pseudomonadati</taxon>
        <taxon>Pseudomonadota</taxon>
        <taxon>Gammaproteobacteria</taxon>
        <taxon>Alteromonadales</taxon>
        <taxon>Shewanellaceae</taxon>
        <taxon>Shewanella</taxon>
    </lineage>
</organism>
<dbReference type="EC" id="1.4.4.2" evidence="1"/>
<dbReference type="EMBL" id="CP000681">
    <property type="protein sequence ID" value="ABP76921.1"/>
    <property type="molecule type" value="Genomic_DNA"/>
</dbReference>
<dbReference type="SMR" id="A4YAD8"/>
<dbReference type="STRING" id="319224.Sputcn32_3209"/>
<dbReference type="KEGG" id="spc:Sputcn32_3209"/>
<dbReference type="eggNOG" id="COG0403">
    <property type="taxonomic scope" value="Bacteria"/>
</dbReference>
<dbReference type="eggNOG" id="COG1003">
    <property type="taxonomic scope" value="Bacteria"/>
</dbReference>
<dbReference type="HOGENOM" id="CLU_004620_1_1_6"/>
<dbReference type="GO" id="GO:0005829">
    <property type="term" value="C:cytosol"/>
    <property type="evidence" value="ECO:0007669"/>
    <property type="project" value="TreeGrafter"/>
</dbReference>
<dbReference type="GO" id="GO:0005960">
    <property type="term" value="C:glycine cleavage complex"/>
    <property type="evidence" value="ECO:0007669"/>
    <property type="project" value="TreeGrafter"/>
</dbReference>
<dbReference type="GO" id="GO:0016594">
    <property type="term" value="F:glycine binding"/>
    <property type="evidence" value="ECO:0007669"/>
    <property type="project" value="TreeGrafter"/>
</dbReference>
<dbReference type="GO" id="GO:0004375">
    <property type="term" value="F:glycine dehydrogenase (decarboxylating) activity"/>
    <property type="evidence" value="ECO:0007669"/>
    <property type="project" value="UniProtKB-EC"/>
</dbReference>
<dbReference type="GO" id="GO:0030170">
    <property type="term" value="F:pyridoxal phosphate binding"/>
    <property type="evidence" value="ECO:0007669"/>
    <property type="project" value="TreeGrafter"/>
</dbReference>
<dbReference type="GO" id="GO:0019464">
    <property type="term" value="P:glycine decarboxylation via glycine cleavage system"/>
    <property type="evidence" value="ECO:0007669"/>
    <property type="project" value="UniProtKB-UniRule"/>
</dbReference>
<dbReference type="CDD" id="cd00613">
    <property type="entry name" value="GDC-P"/>
    <property type="match status" value="2"/>
</dbReference>
<dbReference type="FunFam" id="3.40.640.10:FF:000005">
    <property type="entry name" value="Glycine dehydrogenase (decarboxylating), mitochondrial"/>
    <property type="match status" value="1"/>
</dbReference>
<dbReference type="FunFam" id="3.90.1150.10:FF:000007">
    <property type="entry name" value="Glycine dehydrogenase (decarboxylating), mitochondrial"/>
    <property type="match status" value="1"/>
</dbReference>
<dbReference type="FunFam" id="3.40.640.10:FF:000007">
    <property type="entry name" value="glycine dehydrogenase (Decarboxylating), mitochondrial"/>
    <property type="match status" value="1"/>
</dbReference>
<dbReference type="Gene3D" id="3.90.1150.10">
    <property type="entry name" value="Aspartate Aminotransferase, domain 1"/>
    <property type="match status" value="2"/>
</dbReference>
<dbReference type="Gene3D" id="3.40.640.10">
    <property type="entry name" value="Type I PLP-dependent aspartate aminotransferase-like (Major domain)"/>
    <property type="match status" value="2"/>
</dbReference>
<dbReference type="HAMAP" id="MF_00711">
    <property type="entry name" value="GcvP"/>
    <property type="match status" value="1"/>
</dbReference>
<dbReference type="InterPro" id="IPR003437">
    <property type="entry name" value="GcvP"/>
</dbReference>
<dbReference type="InterPro" id="IPR049316">
    <property type="entry name" value="GDC-P_C"/>
</dbReference>
<dbReference type="InterPro" id="IPR049315">
    <property type="entry name" value="GDC-P_N"/>
</dbReference>
<dbReference type="InterPro" id="IPR020581">
    <property type="entry name" value="GDC_P"/>
</dbReference>
<dbReference type="InterPro" id="IPR015424">
    <property type="entry name" value="PyrdxlP-dep_Trfase"/>
</dbReference>
<dbReference type="InterPro" id="IPR015421">
    <property type="entry name" value="PyrdxlP-dep_Trfase_major"/>
</dbReference>
<dbReference type="InterPro" id="IPR015422">
    <property type="entry name" value="PyrdxlP-dep_Trfase_small"/>
</dbReference>
<dbReference type="NCBIfam" id="TIGR00461">
    <property type="entry name" value="gcvP"/>
    <property type="match status" value="1"/>
</dbReference>
<dbReference type="NCBIfam" id="NF003346">
    <property type="entry name" value="PRK04366.1"/>
    <property type="match status" value="1"/>
</dbReference>
<dbReference type="PANTHER" id="PTHR11773:SF13">
    <property type="entry name" value="GLYCINE DEHYDROGENASE (DECARBOXYLATING)"/>
    <property type="match status" value="1"/>
</dbReference>
<dbReference type="PANTHER" id="PTHR11773">
    <property type="entry name" value="GLYCINE DEHYDROGENASE, DECARBOXYLATING"/>
    <property type="match status" value="1"/>
</dbReference>
<dbReference type="Pfam" id="PF21478">
    <property type="entry name" value="GcvP2_C"/>
    <property type="match status" value="1"/>
</dbReference>
<dbReference type="Pfam" id="PF02347">
    <property type="entry name" value="GDC-P"/>
    <property type="match status" value="2"/>
</dbReference>
<dbReference type="SUPFAM" id="SSF53383">
    <property type="entry name" value="PLP-dependent transferases"/>
    <property type="match status" value="2"/>
</dbReference>